<keyword id="KW-0963">Cytoplasm</keyword>
<keyword id="KW-0325">Glycoprotein</keyword>
<keyword id="KW-1185">Reference proteome</keyword>
<keyword id="KW-0964">Secreted</keyword>
<keyword id="KW-0732">Signal</keyword>
<accession>Q08300</accession>
<accession>D6W1R1</accession>
<reference key="1">
    <citation type="journal article" date="1997" name="Nature">
        <title>The nucleotide sequence of Saccharomyces cerevisiae chromosome XV.</title>
        <authorList>
            <person name="Dujon B."/>
            <person name="Albermann K."/>
            <person name="Aldea M."/>
            <person name="Alexandraki D."/>
            <person name="Ansorge W."/>
            <person name="Arino J."/>
            <person name="Benes V."/>
            <person name="Bohn C."/>
            <person name="Bolotin-Fukuhara M."/>
            <person name="Bordonne R."/>
            <person name="Boyer J."/>
            <person name="Camasses A."/>
            <person name="Casamayor A."/>
            <person name="Casas C."/>
            <person name="Cheret G."/>
            <person name="Cziepluch C."/>
            <person name="Daignan-Fornier B."/>
            <person name="Dang V.-D."/>
            <person name="de Haan M."/>
            <person name="Delius H."/>
            <person name="Durand P."/>
            <person name="Fairhead C."/>
            <person name="Feldmann H."/>
            <person name="Gaillon L."/>
            <person name="Galisson F."/>
            <person name="Gamo F.-J."/>
            <person name="Gancedo C."/>
            <person name="Goffeau A."/>
            <person name="Goulding S.E."/>
            <person name="Grivell L.A."/>
            <person name="Habbig B."/>
            <person name="Hand N.J."/>
            <person name="Hani J."/>
            <person name="Hattenhorst U."/>
            <person name="Hebling U."/>
            <person name="Hernando Y."/>
            <person name="Herrero E."/>
            <person name="Heumann K."/>
            <person name="Hiesel R."/>
            <person name="Hilger F."/>
            <person name="Hofmann B."/>
            <person name="Hollenberg C.P."/>
            <person name="Hughes B."/>
            <person name="Jauniaux J.-C."/>
            <person name="Kalogeropoulos A."/>
            <person name="Katsoulou C."/>
            <person name="Kordes E."/>
            <person name="Lafuente M.J."/>
            <person name="Landt O."/>
            <person name="Louis E.J."/>
            <person name="Maarse A.C."/>
            <person name="Madania A."/>
            <person name="Mannhaupt G."/>
            <person name="Marck C."/>
            <person name="Martin R.P."/>
            <person name="Mewes H.-W."/>
            <person name="Michaux G."/>
            <person name="Paces V."/>
            <person name="Parle-McDermott A.G."/>
            <person name="Pearson B.M."/>
            <person name="Perrin A."/>
            <person name="Pettersson B."/>
            <person name="Poch O."/>
            <person name="Pohl T.M."/>
            <person name="Poirey R."/>
            <person name="Portetelle D."/>
            <person name="Pujol A."/>
            <person name="Purnelle B."/>
            <person name="Ramezani Rad M."/>
            <person name="Rechmann S."/>
            <person name="Schwager C."/>
            <person name="Schweizer M."/>
            <person name="Sor F."/>
            <person name="Sterky F."/>
            <person name="Tarassov I.A."/>
            <person name="Teodoru C."/>
            <person name="Tettelin H."/>
            <person name="Thierry A."/>
            <person name="Tobiasch E."/>
            <person name="Tzermia M."/>
            <person name="Uhlen M."/>
            <person name="Unseld M."/>
            <person name="Valens M."/>
            <person name="Vandenbol M."/>
            <person name="Vetter I."/>
            <person name="Vlcek C."/>
            <person name="Voet M."/>
            <person name="Volckaert G."/>
            <person name="Voss H."/>
            <person name="Wambutt R."/>
            <person name="Wedler H."/>
            <person name="Wiemann S."/>
            <person name="Winsor B."/>
            <person name="Wolfe K.H."/>
            <person name="Zollner A."/>
            <person name="Zumstein E."/>
            <person name="Kleine K."/>
        </authorList>
    </citation>
    <scope>NUCLEOTIDE SEQUENCE [LARGE SCALE GENOMIC DNA]</scope>
    <source>
        <strain>ATCC 204508 / S288c</strain>
    </source>
</reference>
<reference key="2">
    <citation type="journal article" date="2014" name="G3 (Bethesda)">
        <title>The reference genome sequence of Saccharomyces cerevisiae: Then and now.</title>
        <authorList>
            <person name="Engel S.R."/>
            <person name="Dietrich F.S."/>
            <person name="Fisk D.G."/>
            <person name="Binkley G."/>
            <person name="Balakrishnan R."/>
            <person name="Costanzo M.C."/>
            <person name="Dwight S.S."/>
            <person name="Hitz B.C."/>
            <person name="Karra K."/>
            <person name="Nash R.S."/>
            <person name="Weng S."/>
            <person name="Wong E.D."/>
            <person name="Lloyd P."/>
            <person name="Skrzypek M.S."/>
            <person name="Miyasato S.R."/>
            <person name="Simison M."/>
            <person name="Cherry J.M."/>
        </authorList>
    </citation>
    <scope>GENOME REANNOTATION</scope>
    <source>
        <strain>ATCC 204508 / S288c</strain>
    </source>
</reference>
<reference key="3">
    <citation type="journal article" date="2002" name="Curr. Genet.">
        <title>Sequence-based approach for identification of cell wall proteins in Saccharomyces cerevisiae.</title>
        <authorList>
            <person name="Terashima H."/>
            <person name="Fukuchi S."/>
            <person name="Nakai K."/>
            <person name="Arisawa M."/>
            <person name="Hamada K."/>
            <person name="Yabuki N."/>
            <person name="Kitada K."/>
        </authorList>
    </citation>
    <scope>SUBCELLULAR LOCATION</scope>
</reference>
<reference key="4">
    <citation type="journal article" date="2003" name="Genetics">
        <title>Functional genomics reveals relationships between the retrovirus-like Ty1 element and its host Saccharomyces cerevisiae.</title>
        <authorList>
            <person name="Griffith J.L."/>
            <person name="Coleman L.E."/>
            <person name="Raymond A.S."/>
            <person name="Goodson S.G."/>
            <person name="Pittard W.S."/>
            <person name="Tsui C."/>
            <person name="Devine S.E."/>
        </authorList>
    </citation>
    <scope>DISRUPTION PHENOTYPE</scope>
</reference>
<reference key="5">
    <citation type="journal article" date="2016" name="Nat. Methods">
        <title>One library to make them all: streamlining the creation of yeast libraries via a SWAp-Tag strategy.</title>
        <authorList>
            <person name="Yofe I."/>
            <person name="Weill U."/>
            <person name="Meurer M."/>
            <person name="Chuartzman S."/>
            <person name="Zalckvar E."/>
            <person name="Goldman O."/>
            <person name="Ben-Dor S."/>
            <person name="Schuetze C."/>
            <person name="Wiedemann N."/>
            <person name="Knop M."/>
            <person name="Khmelinskii A."/>
            <person name="Schuldiner M."/>
        </authorList>
    </citation>
    <scope>SUBCELLULAR LOCATION</scope>
</reference>
<proteinExistence type="inferred from homology"/>
<protein>
    <recommendedName>
        <fullName evidence="5">Secreted protein CSS3</fullName>
    </recommendedName>
    <alternativeName>
        <fullName evidence="5">Condition specific secretion protein 3</fullName>
    </alternativeName>
</protein>
<comment type="subcellular location">
    <subcellularLocation>
        <location evidence="6">Cytoplasm</location>
    </subcellularLocation>
    <subcellularLocation>
        <location evidence="4">Secreted</location>
    </subcellularLocation>
</comment>
<comment type="disruption phenotype">
    <text evidence="3">Leads to elevated levels of Ty1 retrotransposition and Ty1 cDNA.</text>
</comment>
<sequence>MVPLFGLFCIFSQLYSLCSAYVDITSGYQVFFNLPTNMTNNQICWLFQASYYDIYSDKSGRTLRTGRFEPGDQQSLIYRDTLVELEAITDSYEYSNLDLSTYNGPEPYNSETDYCTDIMDLVMRVYDEEGHYVHPVANNSTNACAHPTPPTLNNLLISNYSDGRNYKESSI</sequence>
<dbReference type="EMBL" id="Z74901">
    <property type="protein sequence ID" value="CAA99181.1"/>
    <property type="molecule type" value="Genomic_DNA"/>
</dbReference>
<dbReference type="EMBL" id="BK006948">
    <property type="protein sequence ID" value="DAA10627.1"/>
    <property type="molecule type" value="Genomic_DNA"/>
</dbReference>
<dbReference type="PIR" id="S66858">
    <property type="entry name" value="S66858"/>
</dbReference>
<dbReference type="RefSeq" id="NP_014483.1">
    <property type="nucleotide sequence ID" value="NM_001183412.1"/>
</dbReference>
<dbReference type="BioGRID" id="34259">
    <property type="interactions" value="36"/>
</dbReference>
<dbReference type="DIP" id="DIP-4200N"/>
<dbReference type="FunCoup" id="Q08300">
    <property type="interactions" value="49"/>
</dbReference>
<dbReference type="IntAct" id="Q08300">
    <property type="interactions" value="1"/>
</dbReference>
<dbReference type="STRING" id="4932.YOL159C"/>
<dbReference type="GlyCosmos" id="Q08300">
    <property type="glycosylation" value="3 sites, No reported glycans"/>
</dbReference>
<dbReference type="GlyGen" id="Q08300">
    <property type="glycosylation" value="3 sites"/>
</dbReference>
<dbReference type="PaxDb" id="4932-YOL159C"/>
<dbReference type="PeptideAtlas" id="Q08300"/>
<dbReference type="EnsemblFungi" id="YOL159C_mRNA">
    <property type="protein sequence ID" value="YOL159C"/>
    <property type="gene ID" value="YOL159C"/>
</dbReference>
<dbReference type="GeneID" id="854006"/>
<dbReference type="KEGG" id="sce:YOL159C"/>
<dbReference type="AGR" id="SGD:S000005519"/>
<dbReference type="SGD" id="S000005519">
    <property type="gene designation" value="CSS3"/>
</dbReference>
<dbReference type="VEuPathDB" id="FungiDB:YOL159C"/>
<dbReference type="HOGENOM" id="CLU_133431_0_0_1"/>
<dbReference type="InParanoid" id="Q08300"/>
<dbReference type="OMA" id="YNGSEPY"/>
<dbReference type="OrthoDB" id="4044370at2759"/>
<dbReference type="BioCyc" id="YEAST:G3O-33547-MONOMER"/>
<dbReference type="BioGRID-ORCS" id="854006">
    <property type="hits" value="1 hit in 10 CRISPR screens"/>
</dbReference>
<dbReference type="PRO" id="PR:Q08300"/>
<dbReference type="Proteomes" id="UP000002311">
    <property type="component" value="Chromosome XV"/>
</dbReference>
<dbReference type="RNAct" id="Q08300">
    <property type="molecule type" value="protein"/>
</dbReference>
<dbReference type="GO" id="GO:0071944">
    <property type="term" value="C:cell periphery"/>
    <property type="evidence" value="ECO:0007005"/>
    <property type="project" value="SGD"/>
</dbReference>
<dbReference type="GO" id="GO:0005737">
    <property type="term" value="C:cytoplasm"/>
    <property type="evidence" value="ECO:0007669"/>
    <property type="project" value="UniProtKB-SubCell"/>
</dbReference>
<dbReference type="GO" id="GO:0005576">
    <property type="term" value="C:extracellular region"/>
    <property type="evidence" value="ECO:0007005"/>
    <property type="project" value="SGD"/>
</dbReference>
<name>CSS3_YEAST</name>
<organism>
    <name type="scientific">Saccharomyces cerevisiae (strain ATCC 204508 / S288c)</name>
    <name type="common">Baker's yeast</name>
    <dbReference type="NCBI Taxonomy" id="559292"/>
    <lineage>
        <taxon>Eukaryota</taxon>
        <taxon>Fungi</taxon>
        <taxon>Dikarya</taxon>
        <taxon>Ascomycota</taxon>
        <taxon>Saccharomycotina</taxon>
        <taxon>Saccharomycetes</taxon>
        <taxon>Saccharomycetales</taxon>
        <taxon>Saccharomycetaceae</taxon>
        <taxon>Saccharomyces</taxon>
    </lineage>
</organism>
<feature type="signal peptide" evidence="1">
    <location>
        <begin position="1"/>
        <end position="20"/>
    </location>
</feature>
<feature type="chain" id="PRO_0000245276" description="Secreted protein CSS3">
    <location>
        <begin position="21"/>
        <end position="171"/>
    </location>
</feature>
<feature type="glycosylation site" description="N-linked (GlcNAc...) asparagine" evidence="2">
    <location>
        <position position="37"/>
    </location>
</feature>
<feature type="glycosylation site" description="N-linked (GlcNAc...) asparagine" evidence="2">
    <location>
        <position position="139"/>
    </location>
</feature>
<feature type="glycosylation site" description="N-linked (GlcNAc...) asparagine" evidence="2">
    <location>
        <position position="159"/>
    </location>
</feature>
<evidence type="ECO:0000255" key="1"/>
<evidence type="ECO:0000255" key="2">
    <source>
        <dbReference type="PROSITE-ProRule" id="PRU00498"/>
    </source>
</evidence>
<evidence type="ECO:0000269" key="3">
    <source>
    </source>
</evidence>
<evidence type="ECO:0000269" key="4">
    <source>
    </source>
</evidence>
<evidence type="ECO:0000303" key="5">
    <source>
    </source>
</evidence>
<evidence type="ECO:0000305" key="6">
    <source>
    </source>
</evidence>
<gene>
    <name evidence="5" type="primary">CSS3</name>
    <name type="ordered locus">YOL159C</name>
</gene>